<gene>
    <name evidence="1" type="primary">accD</name>
    <name type="ordered locus">SSPA0462</name>
</gene>
<organism>
    <name type="scientific">Salmonella paratyphi A (strain AKU_12601)</name>
    <dbReference type="NCBI Taxonomy" id="554290"/>
    <lineage>
        <taxon>Bacteria</taxon>
        <taxon>Pseudomonadati</taxon>
        <taxon>Pseudomonadota</taxon>
        <taxon>Gammaproteobacteria</taxon>
        <taxon>Enterobacterales</taxon>
        <taxon>Enterobacteriaceae</taxon>
        <taxon>Salmonella</taxon>
    </lineage>
</organism>
<feature type="chain" id="PRO_0000359057" description="Acetyl-coenzyme A carboxylase carboxyl transferase subunit beta">
    <location>
        <begin position="1"/>
        <end position="304"/>
    </location>
</feature>
<feature type="domain" description="CoA carboxyltransferase N-terminal" evidence="2">
    <location>
        <begin position="23"/>
        <end position="292"/>
    </location>
</feature>
<feature type="zinc finger region" description="C4-type" evidence="1">
    <location>
        <begin position="27"/>
        <end position="49"/>
    </location>
</feature>
<feature type="region of interest" description="Disordered" evidence="3">
    <location>
        <begin position="284"/>
        <end position="304"/>
    </location>
</feature>
<feature type="binding site" evidence="1">
    <location>
        <position position="27"/>
    </location>
    <ligand>
        <name>Zn(2+)</name>
        <dbReference type="ChEBI" id="CHEBI:29105"/>
    </ligand>
</feature>
<feature type="binding site" evidence="1">
    <location>
        <position position="30"/>
    </location>
    <ligand>
        <name>Zn(2+)</name>
        <dbReference type="ChEBI" id="CHEBI:29105"/>
    </ligand>
</feature>
<feature type="binding site" evidence="1">
    <location>
        <position position="46"/>
    </location>
    <ligand>
        <name>Zn(2+)</name>
        <dbReference type="ChEBI" id="CHEBI:29105"/>
    </ligand>
</feature>
<feature type="binding site" evidence="1">
    <location>
        <position position="49"/>
    </location>
    <ligand>
        <name>Zn(2+)</name>
        <dbReference type="ChEBI" id="CHEBI:29105"/>
    </ligand>
</feature>
<proteinExistence type="inferred from homology"/>
<reference key="1">
    <citation type="journal article" date="2009" name="BMC Genomics">
        <title>Pseudogene accumulation in the evolutionary histories of Salmonella enterica serovars Paratyphi A and Typhi.</title>
        <authorList>
            <person name="Holt K.E."/>
            <person name="Thomson N.R."/>
            <person name="Wain J."/>
            <person name="Langridge G.C."/>
            <person name="Hasan R."/>
            <person name="Bhutta Z.A."/>
            <person name="Quail M.A."/>
            <person name="Norbertczak H."/>
            <person name="Walker D."/>
            <person name="Simmonds M."/>
            <person name="White B."/>
            <person name="Bason N."/>
            <person name="Mungall K."/>
            <person name="Dougan G."/>
            <person name="Parkhill J."/>
        </authorList>
    </citation>
    <scope>NUCLEOTIDE SEQUENCE [LARGE SCALE GENOMIC DNA]</scope>
    <source>
        <strain>AKU_12601</strain>
    </source>
</reference>
<sequence length="304" mass="33244">MSWIERIKSNITPTRKASIPEGVWTKCDSCGQVLYRAELERNLEVCPKCDHHMRMSARNRLHSLLDEGSLVELGSELEPKDVLKFRDSKKYKDRLASAQKETGEKDALVVMKGTLHGMPVVAAAFEFAFMGGSMGSVVGARFVRAVEQALEDNCPLVCFSASGGARMQEALMSLMQMAKTSAALAKMQERGLPYISVLTDPTMGGVSASFAMLGDLNIAEPKALIGFAGPRVIEQTVREKLPPGFQRSEFLIEKGAIDMIVRRPEMRLKLASILAKLMNLPAPNPDAPREGVVVPPAPDQESEV</sequence>
<evidence type="ECO:0000255" key="1">
    <source>
        <dbReference type="HAMAP-Rule" id="MF_01395"/>
    </source>
</evidence>
<evidence type="ECO:0000255" key="2">
    <source>
        <dbReference type="PROSITE-ProRule" id="PRU01136"/>
    </source>
</evidence>
<evidence type="ECO:0000256" key="3">
    <source>
        <dbReference type="SAM" id="MobiDB-lite"/>
    </source>
</evidence>
<name>ACCD_SALPK</name>
<dbReference type="EC" id="2.1.3.15" evidence="1"/>
<dbReference type="EMBL" id="FM200053">
    <property type="protein sequence ID" value="CAR58591.1"/>
    <property type="molecule type" value="Genomic_DNA"/>
</dbReference>
<dbReference type="RefSeq" id="WP_000118384.1">
    <property type="nucleotide sequence ID" value="NC_011147.1"/>
</dbReference>
<dbReference type="SMR" id="B5BCI0"/>
<dbReference type="KEGG" id="sek:SSPA0462"/>
<dbReference type="HOGENOM" id="CLU_015486_1_0_6"/>
<dbReference type="UniPathway" id="UPA00655">
    <property type="reaction ID" value="UER00711"/>
</dbReference>
<dbReference type="Proteomes" id="UP000001869">
    <property type="component" value="Chromosome"/>
</dbReference>
<dbReference type="GO" id="GO:0009329">
    <property type="term" value="C:acetate CoA-transferase complex"/>
    <property type="evidence" value="ECO:0007669"/>
    <property type="project" value="TreeGrafter"/>
</dbReference>
<dbReference type="GO" id="GO:0003989">
    <property type="term" value="F:acetyl-CoA carboxylase activity"/>
    <property type="evidence" value="ECO:0007669"/>
    <property type="project" value="InterPro"/>
</dbReference>
<dbReference type="GO" id="GO:0005524">
    <property type="term" value="F:ATP binding"/>
    <property type="evidence" value="ECO:0007669"/>
    <property type="project" value="UniProtKB-KW"/>
</dbReference>
<dbReference type="GO" id="GO:0016743">
    <property type="term" value="F:carboxyl- or carbamoyltransferase activity"/>
    <property type="evidence" value="ECO:0007669"/>
    <property type="project" value="UniProtKB-UniRule"/>
</dbReference>
<dbReference type="GO" id="GO:0008270">
    <property type="term" value="F:zinc ion binding"/>
    <property type="evidence" value="ECO:0007669"/>
    <property type="project" value="UniProtKB-UniRule"/>
</dbReference>
<dbReference type="GO" id="GO:0006633">
    <property type="term" value="P:fatty acid biosynthetic process"/>
    <property type="evidence" value="ECO:0007669"/>
    <property type="project" value="UniProtKB-KW"/>
</dbReference>
<dbReference type="GO" id="GO:2001295">
    <property type="term" value="P:malonyl-CoA biosynthetic process"/>
    <property type="evidence" value="ECO:0007669"/>
    <property type="project" value="UniProtKB-UniRule"/>
</dbReference>
<dbReference type="FunFam" id="3.90.226.10:FF:000013">
    <property type="entry name" value="Acetyl-coenzyme A carboxylase carboxyl transferase subunit beta"/>
    <property type="match status" value="1"/>
</dbReference>
<dbReference type="Gene3D" id="3.90.226.10">
    <property type="entry name" value="2-enoyl-CoA Hydratase, Chain A, domain 1"/>
    <property type="match status" value="1"/>
</dbReference>
<dbReference type="HAMAP" id="MF_01395">
    <property type="entry name" value="AcetylCoA_CT_beta"/>
    <property type="match status" value="1"/>
</dbReference>
<dbReference type="InterPro" id="IPR034733">
    <property type="entry name" value="AcCoA_carboxyl_beta"/>
</dbReference>
<dbReference type="InterPro" id="IPR000438">
    <property type="entry name" value="Acetyl_CoA_COase_Trfase_b_su"/>
</dbReference>
<dbReference type="InterPro" id="IPR029045">
    <property type="entry name" value="ClpP/crotonase-like_dom_sf"/>
</dbReference>
<dbReference type="InterPro" id="IPR011762">
    <property type="entry name" value="COA_CT_N"/>
</dbReference>
<dbReference type="InterPro" id="IPR041010">
    <property type="entry name" value="Znf-ACC"/>
</dbReference>
<dbReference type="NCBIfam" id="TIGR00515">
    <property type="entry name" value="accD"/>
    <property type="match status" value="1"/>
</dbReference>
<dbReference type="PANTHER" id="PTHR42995">
    <property type="entry name" value="ACETYL-COENZYME A CARBOXYLASE CARBOXYL TRANSFERASE SUBUNIT BETA, CHLOROPLASTIC"/>
    <property type="match status" value="1"/>
</dbReference>
<dbReference type="PANTHER" id="PTHR42995:SF5">
    <property type="entry name" value="ACETYL-COENZYME A CARBOXYLASE CARBOXYL TRANSFERASE SUBUNIT BETA, CHLOROPLASTIC"/>
    <property type="match status" value="1"/>
</dbReference>
<dbReference type="Pfam" id="PF01039">
    <property type="entry name" value="Carboxyl_trans"/>
    <property type="match status" value="1"/>
</dbReference>
<dbReference type="Pfam" id="PF17848">
    <property type="entry name" value="Zn_ribbon_ACC"/>
    <property type="match status" value="1"/>
</dbReference>
<dbReference type="PRINTS" id="PR01070">
    <property type="entry name" value="ACCCTRFRASEB"/>
</dbReference>
<dbReference type="SUPFAM" id="SSF52096">
    <property type="entry name" value="ClpP/crotonase"/>
    <property type="match status" value="1"/>
</dbReference>
<dbReference type="PROSITE" id="PS50980">
    <property type="entry name" value="COA_CT_NTER"/>
    <property type="match status" value="1"/>
</dbReference>
<protein>
    <recommendedName>
        <fullName evidence="1">Acetyl-coenzyme A carboxylase carboxyl transferase subunit beta</fullName>
        <shortName evidence="1">ACCase subunit beta</shortName>
        <shortName evidence="1">Acetyl-CoA carboxylase carboxyltransferase subunit beta</shortName>
        <ecNumber evidence="1">2.1.3.15</ecNumber>
    </recommendedName>
</protein>
<keyword id="KW-0067">ATP-binding</keyword>
<keyword id="KW-0963">Cytoplasm</keyword>
<keyword id="KW-0275">Fatty acid biosynthesis</keyword>
<keyword id="KW-0276">Fatty acid metabolism</keyword>
<keyword id="KW-0444">Lipid biosynthesis</keyword>
<keyword id="KW-0443">Lipid metabolism</keyword>
<keyword id="KW-0479">Metal-binding</keyword>
<keyword id="KW-0547">Nucleotide-binding</keyword>
<keyword id="KW-0808">Transferase</keyword>
<keyword id="KW-0862">Zinc</keyword>
<keyword id="KW-0863">Zinc-finger</keyword>
<accession>B5BCI0</accession>
<comment type="function">
    <text evidence="1">Component of the acetyl coenzyme A carboxylase (ACC) complex. Biotin carboxylase (BC) catalyzes the carboxylation of biotin on its carrier protein (BCCP) and then the CO(2) group is transferred by the transcarboxylase to acetyl-CoA to form malonyl-CoA.</text>
</comment>
<comment type="catalytic activity">
    <reaction evidence="1">
        <text>N(6)-carboxybiotinyl-L-lysyl-[protein] + acetyl-CoA = N(6)-biotinyl-L-lysyl-[protein] + malonyl-CoA</text>
        <dbReference type="Rhea" id="RHEA:54728"/>
        <dbReference type="Rhea" id="RHEA-COMP:10505"/>
        <dbReference type="Rhea" id="RHEA-COMP:10506"/>
        <dbReference type="ChEBI" id="CHEBI:57288"/>
        <dbReference type="ChEBI" id="CHEBI:57384"/>
        <dbReference type="ChEBI" id="CHEBI:83144"/>
        <dbReference type="ChEBI" id="CHEBI:83145"/>
        <dbReference type="EC" id="2.1.3.15"/>
    </reaction>
</comment>
<comment type="cofactor">
    <cofactor evidence="1">
        <name>Zn(2+)</name>
        <dbReference type="ChEBI" id="CHEBI:29105"/>
    </cofactor>
    <text evidence="1">Binds 1 zinc ion per subunit.</text>
</comment>
<comment type="pathway">
    <text evidence="1">Lipid metabolism; malonyl-CoA biosynthesis; malonyl-CoA from acetyl-CoA: step 1/1.</text>
</comment>
<comment type="subunit">
    <text evidence="1">Acetyl-CoA carboxylase is a heterohexamer composed of biotin carboxyl carrier protein (AccB), biotin carboxylase (AccC) and two subunits each of ACCase subunit alpha (AccA) and ACCase subunit beta (AccD).</text>
</comment>
<comment type="subcellular location">
    <subcellularLocation>
        <location evidence="1">Cytoplasm</location>
    </subcellularLocation>
</comment>
<comment type="similarity">
    <text evidence="1">Belongs to the AccD/PCCB family.</text>
</comment>